<dbReference type="EC" id="6.1.1.10"/>
<dbReference type="EMBL" id="AE000657">
    <property type="protein sequence ID" value="AAC07256.1"/>
    <property type="molecule type" value="Genomic_DNA"/>
</dbReference>
<dbReference type="PIR" id="G70408">
    <property type="entry name" value="G70408"/>
</dbReference>
<dbReference type="RefSeq" id="NP_213862.1">
    <property type="nucleotide sequence ID" value="NC_000918.1"/>
</dbReference>
<dbReference type="RefSeq" id="WP_010880800.1">
    <property type="nucleotide sequence ID" value="NC_000918.1"/>
</dbReference>
<dbReference type="PDB" id="2CSX">
    <property type="method" value="X-ray"/>
    <property type="resolution" value="2.70 A"/>
    <property type="chains" value="A/B=1-497"/>
</dbReference>
<dbReference type="PDB" id="2CT8">
    <property type="method" value="X-ray"/>
    <property type="resolution" value="2.70 A"/>
    <property type="chains" value="A/B=1-497"/>
</dbReference>
<dbReference type="PDBsum" id="2CSX"/>
<dbReference type="PDBsum" id="2CT8"/>
<dbReference type="SMR" id="O67298"/>
<dbReference type="FunCoup" id="O67298">
    <property type="interactions" value="448"/>
</dbReference>
<dbReference type="STRING" id="224324.aq_1257"/>
<dbReference type="EnsemblBacteria" id="AAC07256">
    <property type="protein sequence ID" value="AAC07256"/>
    <property type="gene ID" value="aq_1257"/>
</dbReference>
<dbReference type="KEGG" id="aae:aq_1257"/>
<dbReference type="PATRIC" id="fig|224324.8.peg.980"/>
<dbReference type="eggNOG" id="COG0143">
    <property type="taxonomic scope" value="Bacteria"/>
</dbReference>
<dbReference type="HOGENOM" id="CLU_009710_9_4_0"/>
<dbReference type="InParanoid" id="O67298"/>
<dbReference type="OrthoDB" id="9810191at2"/>
<dbReference type="EvolutionaryTrace" id="O67298"/>
<dbReference type="Proteomes" id="UP000000798">
    <property type="component" value="Chromosome"/>
</dbReference>
<dbReference type="GO" id="GO:0005737">
    <property type="term" value="C:cytoplasm"/>
    <property type="evidence" value="ECO:0007669"/>
    <property type="project" value="UniProtKB-SubCell"/>
</dbReference>
<dbReference type="GO" id="GO:0005524">
    <property type="term" value="F:ATP binding"/>
    <property type="evidence" value="ECO:0007669"/>
    <property type="project" value="UniProtKB-UniRule"/>
</dbReference>
<dbReference type="GO" id="GO:0046872">
    <property type="term" value="F:metal ion binding"/>
    <property type="evidence" value="ECO:0007669"/>
    <property type="project" value="UniProtKB-KW"/>
</dbReference>
<dbReference type="GO" id="GO:0004825">
    <property type="term" value="F:methionine-tRNA ligase activity"/>
    <property type="evidence" value="ECO:0000318"/>
    <property type="project" value="GO_Central"/>
</dbReference>
<dbReference type="GO" id="GO:0006431">
    <property type="term" value="P:methionyl-tRNA aminoacylation"/>
    <property type="evidence" value="ECO:0000318"/>
    <property type="project" value="GO_Central"/>
</dbReference>
<dbReference type="CDD" id="cd07957">
    <property type="entry name" value="Anticodon_Ia_Met"/>
    <property type="match status" value="1"/>
</dbReference>
<dbReference type="CDD" id="cd00814">
    <property type="entry name" value="MetRS_core"/>
    <property type="match status" value="1"/>
</dbReference>
<dbReference type="FunFam" id="2.170.220.10:FF:000001">
    <property type="entry name" value="methionine--tRNA ligase, mitochondrial"/>
    <property type="match status" value="1"/>
</dbReference>
<dbReference type="FunFam" id="1.10.730.10:FF:000043">
    <property type="entry name" value="Methionine-tRNA ligase"/>
    <property type="match status" value="1"/>
</dbReference>
<dbReference type="Gene3D" id="2.170.220.10">
    <property type="match status" value="1"/>
</dbReference>
<dbReference type="Gene3D" id="3.40.50.620">
    <property type="entry name" value="HUPs"/>
    <property type="match status" value="1"/>
</dbReference>
<dbReference type="Gene3D" id="1.10.730.10">
    <property type="entry name" value="Isoleucyl-tRNA Synthetase, Domain 1"/>
    <property type="match status" value="1"/>
</dbReference>
<dbReference type="HAMAP" id="MF_01228">
    <property type="entry name" value="Met_tRNA_synth_type2"/>
    <property type="match status" value="1"/>
</dbReference>
<dbReference type="InterPro" id="IPR041872">
    <property type="entry name" value="Anticodon_Met"/>
</dbReference>
<dbReference type="InterPro" id="IPR013155">
    <property type="entry name" value="M/V/L/I-tRNA-synth_anticd-bd"/>
</dbReference>
<dbReference type="InterPro" id="IPR014758">
    <property type="entry name" value="Met-tRNA_synth"/>
</dbReference>
<dbReference type="InterPro" id="IPR023457">
    <property type="entry name" value="Met-tRNA_synth_2"/>
</dbReference>
<dbReference type="InterPro" id="IPR015413">
    <property type="entry name" value="Methionyl/Leucyl_tRNA_Synth"/>
</dbReference>
<dbReference type="InterPro" id="IPR033911">
    <property type="entry name" value="MetRS_core"/>
</dbReference>
<dbReference type="InterPro" id="IPR014729">
    <property type="entry name" value="Rossmann-like_a/b/a_fold"/>
</dbReference>
<dbReference type="InterPro" id="IPR032678">
    <property type="entry name" value="tRNA-synt_1_cat_dom"/>
</dbReference>
<dbReference type="InterPro" id="IPR009080">
    <property type="entry name" value="tRNAsynth_Ia_anticodon-bd"/>
</dbReference>
<dbReference type="NCBIfam" id="TIGR00398">
    <property type="entry name" value="metG"/>
    <property type="match status" value="1"/>
</dbReference>
<dbReference type="NCBIfam" id="NF008900">
    <property type="entry name" value="PRK12267.1"/>
    <property type="match status" value="1"/>
</dbReference>
<dbReference type="PANTHER" id="PTHR43326:SF1">
    <property type="entry name" value="METHIONINE--TRNA LIGASE, MITOCHONDRIAL"/>
    <property type="match status" value="1"/>
</dbReference>
<dbReference type="PANTHER" id="PTHR43326">
    <property type="entry name" value="METHIONYL-TRNA SYNTHETASE"/>
    <property type="match status" value="1"/>
</dbReference>
<dbReference type="Pfam" id="PF08264">
    <property type="entry name" value="Anticodon_1"/>
    <property type="match status" value="1"/>
</dbReference>
<dbReference type="Pfam" id="PF01406">
    <property type="entry name" value="tRNA-synt_1e"/>
    <property type="match status" value="1"/>
</dbReference>
<dbReference type="Pfam" id="PF09334">
    <property type="entry name" value="tRNA-synt_1g"/>
    <property type="match status" value="1"/>
</dbReference>
<dbReference type="PRINTS" id="PR01041">
    <property type="entry name" value="TRNASYNTHMET"/>
</dbReference>
<dbReference type="SUPFAM" id="SSF47323">
    <property type="entry name" value="Anticodon-binding domain of a subclass of class I aminoacyl-tRNA synthetases"/>
    <property type="match status" value="1"/>
</dbReference>
<dbReference type="SUPFAM" id="SSF52374">
    <property type="entry name" value="Nucleotidylyl transferase"/>
    <property type="match status" value="1"/>
</dbReference>
<name>SYM_AQUAE</name>
<comment type="function">
    <text evidence="1">Is required not only for elongation of protein synthesis but also for the initiation of all mRNA translation through initiator tRNA(fMet) aminoacylation.</text>
</comment>
<comment type="catalytic activity">
    <reaction>
        <text>tRNA(Met) + L-methionine + ATP = L-methionyl-tRNA(Met) + AMP + diphosphate</text>
        <dbReference type="Rhea" id="RHEA:13481"/>
        <dbReference type="Rhea" id="RHEA-COMP:9667"/>
        <dbReference type="Rhea" id="RHEA-COMP:9698"/>
        <dbReference type="ChEBI" id="CHEBI:30616"/>
        <dbReference type="ChEBI" id="CHEBI:33019"/>
        <dbReference type="ChEBI" id="CHEBI:57844"/>
        <dbReference type="ChEBI" id="CHEBI:78442"/>
        <dbReference type="ChEBI" id="CHEBI:78530"/>
        <dbReference type="ChEBI" id="CHEBI:456215"/>
        <dbReference type="EC" id="6.1.1.10"/>
    </reaction>
</comment>
<comment type="cofactor">
    <cofactor evidence="1">
        <name>Zn(2+)</name>
        <dbReference type="ChEBI" id="CHEBI:29105"/>
    </cofactor>
    <text evidence="1">Binds 1 zinc ion per subunit.</text>
</comment>
<comment type="subunit">
    <text evidence="1">Monomer.</text>
</comment>
<comment type="subcellular location">
    <subcellularLocation>
        <location evidence="1">Cytoplasm</location>
    </subcellularLocation>
</comment>
<comment type="similarity">
    <text evidence="2">Belongs to the class-I aminoacyl-tRNA synthetase family. MetG type 2A subfamily.</text>
</comment>
<gene>
    <name type="primary">metG</name>
    <name type="ordered locus">aq_1257</name>
</gene>
<keyword id="KW-0002">3D-structure</keyword>
<keyword id="KW-0030">Aminoacyl-tRNA synthetase</keyword>
<keyword id="KW-0067">ATP-binding</keyword>
<keyword id="KW-0963">Cytoplasm</keyword>
<keyword id="KW-0436">Ligase</keyword>
<keyword id="KW-0479">Metal-binding</keyword>
<keyword id="KW-0547">Nucleotide-binding</keyword>
<keyword id="KW-0648">Protein biosynthesis</keyword>
<keyword id="KW-1185">Reference proteome</keyword>
<keyword id="KW-0862">Zinc</keyword>
<evidence type="ECO:0000250" key="1"/>
<evidence type="ECO:0000305" key="2"/>
<evidence type="ECO:0007829" key="3">
    <source>
        <dbReference type="PDB" id="2CSX"/>
    </source>
</evidence>
<evidence type="ECO:0007829" key="4">
    <source>
        <dbReference type="PDB" id="2CT8"/>
    </source>
</evidence>
<accession>O67298</accession>
<feature type="chain" id="PRO_0000139206" description="Methionine--tRNA ligase">
    <location>
        <begin position="1"/>
        <end position="497"/>
    </location>
</feature>
<feature type="short sequence motif" description="'HIGH' region">
    <location>
        <begin position="14"/>
        <end position="24"/>
    </location>
</feature>
<feature type="short sequence motif" description="'KMSKS' region">
    <location>
        <begin position="295"/>
        <end position="299"/>
    </location>
</feature>
<feature type="binding site" evidence="1">
    <location>
        <position position="129"/>
    </location>
    <ligand>
        <name>Zn(2+)</name>
        <dbReference type="ChEBI" id="CHEBI:29105"/>
    </ligand>
</feature>
<feature type="binding site" evidence="1">
    <location>
        <position position="132"/>
    </location>
    <ligand>
        <name>Zn(2+)</name>
        <dbReference type="ChEBI" id="CHEBI:29105"/>
    </ligand>
</feature>
<feature type="binding site" evidence="1">
    <location>
        <position position="147"/>
    </location>
    <ligand>
        <name>Zn(2+)</name>
        <dbReference type="ChEBI" id="CHEBI:29105"/>
    </ligand>
</feature>
<feature type="binding site" evidence="1">
    <location>
        <position position="150"/>
    </location>
    <ligand>
        <name>Zn(2+)</name>
        <dbReference type="ChEBI" id="CHEBI:29105"/>
    </ligand>
</feature>
<feature type="binding site" evidence="1">
    <location>
        <position position="298"/>
    </location>
    <ligand>
        <name>ATP</name>
        <dbReference type="ChEBI" id="CHEBI:30616"/>
    </ligand>
</feature>
<feature type="strand" evidence="3">
    <location>
        <begin position="6"/>
        <end position="15"/>
    </location>
</feature>
<feature type="helix" evidence="3">
    <location>
        <begin position="22"/>
        <end position="40"/>
    </location>
</feature>
<feature type="strand" evidence="3">
    <location>
        <begin position="44"/>
        <end position="52"/>
    </location>
</feature>
<feature type="helix" evidence="3">
    <location>
        <begin position="56"/>
        <end position="59"/>
    </location>
</feature>
<feature type="helix" evidence="3">
    <location>
        <begin position="61"/>
        <end position="64"/>
    </location>
</feature>
<feature type="strand" evidence="3">
    <location>
        <begin position="65"/>
        <end position="67"/>
    </location>
</feature>
<feature type="helix" evidence="3">
    <location>
        <begin position="69"/>
        <end position="86"/>
    </location>
</feature>
<feature type="strand" evidence="3">
    <location>
        <begin position="92"/>
        <end position="96"/>
    </location>
</feature>
<feature type="helix" evidence="3">
    <location>
        <begin position="100"/>
        <end position="115"/>
    </location>
</feature>
<feature type="strand" evidence="3">
    <location>
        <begin position="119"/>
        <end position="123"/>
    </location>
</feature>
<feature type="strand" evidence="3">
    <location>
        <begin position="160"/>
        <end position="164"/>
    </location>
</feature>
<feature type="helix" evidence="4">
    <location>
        <begin position="166"/>
        <end position="168"/>
    </location>
</feature>
<feature type="helix" evidence="3">
    <location>
        <begin position="170"/>
        <end position="179"/>
    </location>
</feature>
<feature type="helix" evidence="4">
    <location>
        <begin position="181"/>
        <end position="183"/>
    </location>
</feature>
<feature type="helix" evidence="3">
    <location>
        <begin position="187"/>
        <end position="199"/>
    </location>
</feature>
<feature type="strand" evidence="3">
    <location>
        <begin position="207"/>
        <end position="209"/>
    </location>
</feature>
<feature type="turn" evidence="3">
    <location>
        <begin position="210"/>
        <end position="212"/>
    </location>
</feature>
<feature type="strand" evidence="3">
    <location>
        <begin position="215"/>
        <end position="219"/>
    </location>
</feature>
<feature type="strand" evidence="3">
    <location>
        <begin position="222"/>
        <end position="227"/>
    </location>
</feature>
<feature type="helix" evidence="3">
    <location>
        <begin position="230"/>
        <end position="234"/>
    </location>
</feature>
<feature type="helix" evidence="3">
    <location>
        <begin position="236"/>
        <end position="239"/>
    </location>
</feature>
<feature type="turn" evidence="3">
    <location>
        <begin position="240"/>
        <end position="244"/>
    </location>
</feature>
<feature type="helix" evidence="3">
    <location>
        <begin position="245"/>
        <end position="248"/>
    </location>
</feature>
<feature type="strand" evidence="3">
    <location>
        <begin position="254"/>
        <end position="257"/>
    </location>
</feature>
<feature type="helix" evidence="3">
    <location>
        <begin position="258"/>
        <end position="260"/>
    </location>
</feature>
<feature type="helix" evidence="3">
    <location>
        <begin position="261"/>
        <end position="265"/>
    </location>
</feature>
<feature type="helix" evidence="3">
    <location>
        <begin position="267"/>
        <end position="275"/>
    </location>
</feature>
<feature type="strand" evidence="3">
    <location>
        <begin position="283"/>
        <end position="286"/>
    </location>
</feature>
<feature type="strand" evidence="3">
    <location>
        <begin position="289"/>
        <end position="295"/>
    </location>
</feature>
<feature type="turn" evidence="3">
    <location>
        <begin position="298"/>
        <end position="301"/>
    </location>
</feature>
<feature type="helix" evidence="3">
    <location>
        <begin position="306"/>
        <end position="313"/>
    </location>
</feature>
<feature type="helix" evidence="3">
    <location>
        <begin position="315"/>
        <end position="324"/>
    </location>
</feature>
<feature type="helix" evidence="3">
    <location>
        <begin position="336"/>
        <end position="345"/>
    </location>
</feature>
<feature type="helix" evidence="3">
    <location>
        <begin position="346"/>
        <end position="351"/>
    </location>
</feature>
<feature type="helix" evidence="3">
    <location>
        <begin position="352"/>
        <end position="365"/>
    </location>
</feature>
<feature type="helix" evidence="3">
    <location>
        <begin position="378"/>
        <end position="393"/>
    </location>
</feature>
<feature type="turn" evidence="3">
    <location>
        <begin position="394"/>
        <end position="396"/>
    </location>
</feature>
<feature type="helix" evidence="3">
    <location>
        <begin position="398"/>
        <end position="419"/>
    </location>
</feature>
<feature type="helix" evidence="3">
    <location>
        <begin position="421"/>
        <end position="425"/>
    </location>
</feature>
<feature type="helix" evidence="3">
    <location>
        <begin position="430"/>
        <end position="451"/>
    </location>
</feature>
<feature type="turn" evidence="3">
    <location>
        <begin position="452"/>
        <end position="454"/>
    </location>
</feature>
<feature type="helix" evidence="3">
    <location>
        <begin position="456"/>
        <end position="465"/>
    </location>
</feature>
<organism>
    <name type="scientific">Aquifex aeolicus (strain VF5)</name>
    <dbReference type="NCBI Taxonomy" id="224324"/>
    <lineage>
        <taxon>Bacteria</taxon>
        <taxon>Pseudomonadati</taxon>
        <taxon>Aquificota</taxon>
        <taxon>Aquificia</taxon>
        <taxon>Aquificales</taxon>
        <taxon>Aquificaceae</taxon>
        <taxon>Aquifex</taxon>
    </lineage>
</organism>
<proteinExistence type="evidence at protein level"/>
<reference key="1">
    <citation type="journal article" date="1998" name="Nature">
        <title>The complete genome of the hyperthermophilic bacterium Aquifex aeolicus.</title>
        <authorList>
            <person name="Deckert G."/>
            <person name="Warren P.V."/>
            <person name="Gaasterland T."/>
            <person name="Young W.G."/>
            <person name="Lenox A.L."/>
            <person name="Graham D.E."/>
            <person name="Overbeek R."/>
            <person name="Snead M.A."/>
            <person name="Keller M."/>
            <person name="Aujay M."/>
            <person name="Huber R."/>
            <person name="Feldman R.A."/>
            <person name="Short J.M."/>
            <person name="Olsen G.J."/>
            <person name="Swanson R.V."/>
        </authorList>
    </citation>
    <scope>NUCLEOTIDE SEQUENCE [LARGE SCALE GENOMIC DNA]</scope>
    <source>
        <strain>VF5</strain>
    </source>
</reference>
<reference key="2">
    <citation type="submission" date="2005-09" db="PDB data bank">
        <title>Crystal structure of Aquifex aeolicus methionyl-tRNA synthetase complexed with tRNA(met).</title>
        <authorList>
            <consortium name="RIKEN structural genomics initiative (RSGI)"/>
        </authorList>
    </citation>
    <scope>X-RAY CRYSTALLOGRAPHY (2.7 ANGSTROMS)</scope>
</reference>
<sequence>MTLMKKFYVTTPIYYVNDVPHLGHAYTTIAADTIARYYRLRDYDVFFLTGTDEHGLKIQKKAEELGISPKELVDRNAERFKKLWEFLKIEYTKFIRTTDPYHVKFVQKVFEECYKRGDIYLGEYEGWYCVGCEEFKSEAELAEDHTCPIHQKKCEYIKEPSYFFRLSKYQDKLLELYEKNPEFIQPDYRRNEIISFVKQGLKDLSVTRPRSRVKWGIPVPFDPEHTIYVWFDALFNYISALEDKVEIYWPADLHLVGKDILRFHTVYWPAFLMSLGYELPKKVFAHGWWTVEGKKMSKTLGNVVDPYEVVQEYGLDEVRYFLLREVPFGQDGDFSKKAILNRINGELANEIGNLYSRVVNMAHKFLGGEVSGARDEEYAKIAQESIKNYENYMEKVNFYKAIEEILKFTSYLNKYVDEKQPWALNKERKKEELQKVLYALVDGLFVLTHLLYPITPNKMKEALQMLGEKEFLKELKPYSKNTYKLGERKILFPKREG</sequence>
<protein>
    <recommendedName>
        <fullName>Methionine--tRNA ligase</fullName>
        <ecNumber>6.1.1.10</ecNumber>
    </recommendedName>
    <alternativeName>
        <fullName>Methionyl-tRNA synthetase</fullName>
        <shortName>MetRS</shortName>
    </alternativeName>
</protein>